<name>SFGH1_ECOL5</name>
<keyword id="KW-0378">Hydrolase</keyword>
<keyword id="KW-0719">Serine esterase</keyword>
<gene>
    <name type="primary">frmB</name>
    <name type="ordered locus">ECP_0420</name>
</gene>
<comment type="function">
    <text evidence="1">Serine hydrolase involved in the detoxification of formaldehyde. Hydrolyzes S-formylglutathione to glutathione and formate (By similarity).</text>
</comment>
<comment type="catalytic activity">
    <reaction>
        <text>S-formylglutathione + H2O = formate + glutathione + H(+)</text>
        <dbReference type="Rhea" id="RHEA:14961"/>
        <dbReference type="ChEBI" id="CHEBI:15377"/>
        <dbReference type="ChEBI" id="CHEBI:15378"/>
        <dbReference type="ChEBI" id="CHEBI:15740"/>
        <dbReference type="ChEBI" id="CHEBI:57688"/>
        <dbReference type="ChEBI" id="CHEBI:57925"/>
        <dbReference type="EC" id="3.1.2.12"/>
    </reaction>
</comment>
<comment type="similarity">
    <text evidence="2">Belongs to the esterase D family.</text>
</comment>
<protein>
    <recommendedName>
        <fullName>S-formylglutathione hydrolase FrmB</fullName>
        <shortName>FGH</shortName>
        <ecNumber>3.1.2.12</ecNumber>
    </recommendedName>
</protein>
<dbReference type="EC" id="3.1.2.12"/>
<dbReference type="EMBL" id="CP000247">
    <property type="protein sequence ID" value="ABG68453.1"/>
    <property type="molecule type" value="Genomic_DNA"/>
</dbReference>
<dbReference type="SMR" id="Q0TKS8"/>
<dbReference type="ESTHER" id="ecoli-yaim">
    <property type="family name" value="A85-EsteraseD-FGH"/>
</dbReference>
<dbReference type="MEROPS" id="S09.940"/>
<dbReference type="KEGG" id="ecp:ECP_0420"/>
<dbReference type="HOGENOM" id="CLU_056472_0_0_6"/>
<dbReference type="Proteomes" id="UP000009182">
    <property type="component" value="Chromosome"/>
</dbReference>
<dbReference type="GO" id="GO:0005829">
    <property type="term" value="C:cytosol"/>
    <property type="evidence" value="ECO:0007669"/>
    <property type="project" value="TreeGrafter"/>
</dbReference>
<dbReference type="GO" id="GO:0052689">
    <property type="term" value="F:carboxylic ester hydrolase activity"/>
    <property type="evidence" value="ECO:0007669"/>
    <property type="project" value="UniProtKB-KW"/>
</dbReference>
<dbReference type="GO" id="GO:0018738">
    <property type="term" value="F:S-formylglutathione hydrolase activity"/>
    <property type="evidence" value="ECO:0007669"/>
    <property type="project" value="UniProtKB-EC"/>
</dbReference>
<dbReference type="GO" id="GO:0046294">
    <property type="term" value="P:formaldehyde catabolic process"/>
    <property type="evidence" value="ECO:0007669"/>
    <property type="project" value="InterPro"/>
</dbReference>
<dbReference type="FunFam" id="3.40.50.1820:FF:000002">
    <property type="entry name" value="S-formylglutathione hydrolase"/>
    <property type="match status" value="1"/>
</dbReference>
<dbReference type="Gene3D" id="3.40.50.1820">
    <property type="entry name" value="alpha/beta hydrolase"/>
    <property type="match status" value="1"/>
</dbReference>
<dbReference type="InterPro" id="IPR029058">
    <property type="entry name" value="AB_hydrolase_fold"/>
</dbReference>
<dbReference type="InterPro" id="IPR000801">
    <property type="entry name" value="Esterase-like"/>
</dbReference>
<dbReference type="InterPro" id="IPR014186">
    <property type="entry name" value="S-formylglutathione_hydrol"/>
</dbReference>
<dbReference type="NCBIfam" id="TIGR02821">
    <property type="entry name" value="fghA_ester_D"/>
    <property type="match status" value="1"/>
</dbReference>
<dbReference type="PANTHER" id="PTHR10061">
    <property type="entry name" value="S-FORMYLGLUTATHIONE HYDROLASE"/>
    <property type="match status" value="1"/>
</dbReference>
<dbReference type="PANTHER" id="PTHR10061:SF0">
    <property type="entry name" value="S-FORMYLGLUTATHIONE HYDROLASE"/>
    <property type="match status" value="1"/>
</dbReference>
<dbReference type="Pfam" id="PF00756">
    <property type="entry name" value="Esterase"/>
    <property type="match status" value="1"/>
</dbReference>
<dbReference type="SUPFAM" id="SSF53474">
    <property type="entry name" value="alpha/beta-Hydrolases"/>
    <property type="match status" value="1"/>
</dbReference>
<evidence type="ECO:0000250" key="1"/>
<evidence type="ECO:0000305" key="2"/>
<feature type="chain" id="PRO_0000341662" description="S-formylglutathione hydrolase FrmB">
    <location>
        <begin position="1"/>
        <end position="277"/>
    </location>
</feature>
<feature type="active site" description="Charge relay system" evidence="1">
    <location>
        <position position="145"/>
    </location>
</feature>
<feature type="active site" description="Charge relay system" evidence="1">
    <location>
        <position position="221"/>
    </location>
</feature>
<feature type="active site" description="Charge relay system" evidence="1">
    <location>
        <position position="254"/>
    </location>
</feature>
<proteinExistence type="inferred from homology"/>
<organism>
    <name type="scientific">Escherichia coli O6:K15:H31 (strain 536 / UPEC)</name>
    <dbReference type="NCBI Taxonomy" id="362663"/>
    <lineage>
        <taxon>Bacteria</taxon>
        <taxon>Pseudomonadati</taxon>
        <taxon>Pseudomonadota</taxon>
        <taxon>Gammaproteobacteria</taxon>
        <taxon>Enterobacterales</taxon>
        <taxon>Enterobacteriaceae</taxon>
        <taxon>Escherichia</taxon>
    </lineage>
</organism>
<reference key="1">
    <citation type="journal article" date="2006" name="Mol. Microbiol.">
        <title>Role of pathogenicity island-associated integrases in the genome plasticity of uropathogenic Escherichia coli strain 536.</title>
        <authorList>
            <person name="Hochhut B."/>
            <person name="Wilde C."/>
            <person name="Balling G."/>
            <person name="Middendorf B."/>
            <person name="Dobrindt U."/>
            <person name="Brzuszkiewicz E."/>
            <person name="Gottschalk G."/>
            <person name="Carniel E."/>
            <person name="Hacker J."/>
        </authorList>
    </citation>
    <scope>NUCLEOTIDE SEQUENCE [LARGE SCALE GENOMIC DNA]</scope>
    <source>
        <strain>536 / UPEC</strain>
    </source>
</reference>
<accession>Q0TKS8</accession>
<sequence length="277" mass="31407">MELIEKHASFGGWQNVYRHYSQSLKCEMNVGVYLPPKAENEKLPVLYWLSGLTCNEQNFITKSGMQRYAAEHNIIVVAPDTSPRGSHVADADRYDLGQGAGFYLNATQAPWNEHYKMYDYIRNELPNLVMHHFPATARKSISGHSMGGLGALVLALRNPDEYASVSAFSPIVSPSQVPWGQQAFAAYLGENKDAWLDYDPVSLISQGQRVAEIMVDQGLSDDFYAEQLRTPNLEKICQEMNIKTLIRYHEGYDHSYYFVSSFIGEHIAYHANKLNMR</sequence>